<proteinExistence type="inferred from homology"/>
<protein>
    <recommendedName>
        <fullName evidence="1">D-aminoacyl-tRNA deacylase</fullName>
        <shortName evidence="1">DTD</shortName>
        <ecNumber evidence="1">3.1.1.96</ecNumber>
    </recommendedName>
    <alternativeName>
        <fullName evidence="1">Gly-tRNA(Ala) deacylase</fullName>
    </alternativeName>
</protein>
<gene>
    <name evidence="1" type="primary">dtd</name>
    <name type="ordered locus">Rsph17029_0930</name>
</gene>
<accession>A3PI75</accession>
<comment type="function">
    <text evidence="1">An aminoacyl-tRNA editing enzyme that deacylates mischarged D-aminoacyl-tRNAs. Also deacylates mischarged glycyl-tRNA(Ala), protecting cells against glycine mischarging by AlaRS. Acts via tRNA-based rather than protein-based catalysis; rejects L-amino acids rather than detecting D-amino acids in the active site. By recycling D-aminoacyl-tRNA to D-amino acids and free tRNA molecules, this enzyme counteracts the toxicity associated with the formation of D-aminoacyl-tRNA entities in vivo and helps enforce protein L-homochirality.</text>
</comment>
<comment type="catalytic activity">
    <reaction evidence="1">
        <text>glycyl-tRNA(Ala) + H2O = tRNA(Ala) + glycine + H(+)</text>
        <dbReference type="Rhea" id="RHEA:53744"/>
        <dbReference type="Rhea" id="RHEA-COMP:9657"/>
        <dbReference type="Rhea" id="RHEA-COMP:13640"/>
        <dbReference type="ChEBI" id="CHEBI:15377"/>
        <dbReference type="ChEBI" id="CHEBI:15378"/>
        <dbReference type="ChEBI" id="CHEBI:57305"/>
        <dbReference type="ChEBI" id="CHEBI:78442"/>
        <dbReference type="ChEBI" id="CHEBI:78522"/>
        <dbReference type="EC" id="3.1.1.96"/>
    </reaction>
</comment>
<comment type="catalytic activity">
    <reaction evidence="1">
        <text>a D-aminoacyl-tRNA + H2O = a tRNA + a D-alpha-amino acid + H(+)</text>
        <dbReference type="Rhea" id="RHEA:13953"/>
        <dbReference type="Rhea" id="RHEA-COMP:10123"/>
        <dbReference type="Rhea" id="RHEA-COMP:10124"/>
        <dbReference type="ChEBI" id="CHEBI:15377"/>
        <dbReference type="ChEBI" id="CHEBI:15378"/>
        <dbReference type="ChEBI" id="CHEBI:59871"/>
        <dbReference type="ChEBI" id="CHEBI:78442"/>
        <dbReference type="ChEBI" id="CHEBI:79333"/>
        <dbReference type="EC" id="3.1.1.96"/>
    </reaction>
</comment>
<comment type="subunit">
    <text evidence="1">Homodimer.</text>
</comment>
<comment type="subcellular location">
    <subcellularLocation>
        <location evidence="1">Cytoplasm</location>
    </subcellularLocation>
</comment>
<comment type="domain">
    <text evidence="1">A Gly-cisPro motif from one monomer fits into the active site of the other monomer to allow specific chiral rejection of L-amino acids.</text>
</comment>
<comment type="similarity">
    <text evidence="1">Belongs to the DTD family.</text>
</comment>
<feature type="chain" id="PRO_1000050877" description="D-aminoacyl-tRNA deacylase">
    <location>
        <begin position="1"/>
        <end position="145"/>
    </location>
</feature>
<feature type="short sequence motif" description="Gly-cisPro motif, important for rejection of L-amino acids" evidence="1">
    <location>
        <begin position="137"/>
        <end position="138"/>
    </location>
</feature>
<dbReference type="EC" id="3.1.1.96" evidence="1"/>
<dbReference type="EMBL" id="CP000577">
    <property type="protein sequence ID" value="ABN76041.1"/>
    <property type="molecule type" value="Genomic_DNA"/>
</dbReference>
<dbReference type="RefSeq" id="WP_011840695.1">
    <property type="nucleotide sequence ID" value="NC_009049.1"/>
</dbReference>
<dbReference type="SMR" id="A3PI75"/>
<dbReference type="KEGG" id="rsh:Rsph17029_0930"/>
<dbReference type="HOGENOM" id="CLU_076901_1_1_5"/>
<dbReference type="GO" id="GO:0005737">
    <property type="term" value="C:cytoplasm"/>
    <property type="evidence" value="ECO:0007669"/>
    <property type="project" value="UniProtKB-SubCell"/>
</dbReference>
<dbReference type="GO" id="GO:0051500">
    <property type="term" value="F:D-tyrosyl-tRNA(Tyr) deacylase activity"/>
    <property type="evidence" value="ECO:0007669"/>
    <property type="project" value="TreeGrafter"/>
</dbReference>
<dbReference type="GO" id="GO:0106026">
    <property type="term" value="F:Gly-tRNA(Ala) deacylase activity"/>
    <property type="evidence" value="ECO:0007669"/>
    <property type="project" value="UniProtKB-UniRule"/>
</dbReference>
<dbReference type="GO" id="GO:0043908">
    <property type="term" value="F:Ser(Gly)-tRNA(Ala) hydrolase activity"/>
    <property type="evidence" value="ECO:0007669"/>
    <property type="project" value="UniProtKB-UniRule"/>
</dbReference>
<dbReference type="GO" id="GO:0000049">
    <property type="term" value="F:tRNA binding"/>
    <property type="evidence" value="ECO:0007669"/>
    <property type="project" value="UniProtKB-UniRule"/>
</dbReference>
<dbReference type="GO" id="GO:0019478">
    <property type="term" value="P:D-amino acid catabolic process"/>
    <property type="evidence" value="ECO:0007669"/>
    <property type="project" value="UniProtKB-UniRule"/>
</dbReference>
<dbReference type="FunFam" id="3.50.80.10:FF:000001">
    <property type="entry name" value="D-aminoacyl-tRNA deacylase"/>
    <property type="match status" value="1"/>
</dbReference>
<dbReference type="Gene3D" id="3.50.80.10">
    <property type="entry name" value="D-tyrosyl-tRNA(Tyr) deacylase"/>
    <property type="match status" value="1"/>
</dbReference>
<dbReference type="HAMAP" id="MF_00518">
    <property type="entry name" value="Deacylase_Dtd"/>
    <property type="match status" value="1"/>
</dbReference>
<dbReference type="InterPro" id="IPR003732">
    <property type="entry name" value="Daa-tRNA_deacyls_DTD"/>
</dbReference>
<dbReference type="InterPro" id="IPR023509">
    <property type="entry name" value="DTD-like_sf"/>
</dbReference>
<dbReference type="NCBIfam" id="TIGR00256">
    <property type="entry name" value="D-aminoacyl-tRNA deacylase"/>
    <property type="match status" value="1"/>
</dbReference>
<dbReference type="PANTHER" id="PTHR10472:SF5">
    <property type="entry name" value="D-AMINOACYL-TRNA DEACYLASE 1"/>
    <property type="match status" value="1"/>
</dbReference>
<dbReference type="PANTHER" id="PTHR10472">
    <property type="entry name" value="D-TYROSYL-TRNA TYR DEACYLASE"/>
    <property type="match status" value="1"/>
</dbReference>
<dbReference type="Pfam" id="PF02580">
    <property type="entry name" value="Tyr_Deacylase"/>
    <property type="match status" value="1"/>
</dbReference>
<dbReference type="SUPFAM" id="SSF69500">
    <property type="entry name" value="DTD-like"/>
    <property type="match status" value="1"/>
</dbReference>
<reference key="1">
    <citation type="submission" date="2007-02" db="EMBL/GenBank/DDBJ databases">
        <title>Complete sequence of chromosome 1 of Rhodobacter sphaeroides ATCC 17029.</title>
        <authorList>
            <person name="Copeland A."/>
            <person name="Lucas S."/>
            <person name="Lapidus A."/>
            <person name="Barry K."/>
            <person name="Detter J.C."/>
            <person name="Glavina del Rio T."/>
            <person name="Hammon N."/>
            <person name="Israni S."/>
            <person name="Dalin E."/>
            <person name="Tice H."/>
            <person name="Pitluck S."/>
            <person name="Kiss H."/>
            <person name="Brettin T."/>
            <person name="Bruce D."/>
            <person name="Han C."/>
            <person name="Tapia R."/>
            <person name="Gilna P."/>
            <person name="Schmutz J."/>
            <person name="Larimer F."/>
            <person name="Land M."/>
            <person name="Hauser L."/>
            <person name="Kyrpides N."/>
            <person name="Mikhailova N."/>
            <person name="Richardson P."/>
            <person name="Mackenzie C."/>
            <person name="Choudhary M."/>
            <person name="Donohue T.J."/>
            <person name="Kaplan S."/>
        </authorList>
    </citation>
    <scope>NUCLEOTIDE SEQUENCE [LARGE SCALE GENOMIC DNA]</scope>
    <source>
        <strain>ATCC 17029 / ATH 2.4.9</strain>
    </source>
</reference>
<organism>
    <name type="scientific">Cereibacter sphaeroides (strain ATCC 17029 / ATH 2.4.9)</name>
    <name type="common">Rhodobacter sphaeroides</name>
    <dbReference type="NCBI Taxonomy" id="349101"/>
    <lineage>
        <taxon>Bacteria</taxon>
        <taxon>Pseudomonadati</taxon>
        <taxon>Pseudomonadota</taxon>
        <taxon>Alphaproteobacteria</taxon>
        <taxon>Rhodobacterales</taxon>
        <taxon>Paracoccaceae</taxon>
        <taxon>Cereibacter</taxon>
    </lineage>
</organism>
<evidence type="ECO:0000255" key="1">
    <source>
        <dbReference type="HAMAP-Rule" id="MF_00518"/>
    </source>
</evidence>
<name>DTD_CERS1</name>
<keyword id="KW-0963">Cytoplasm</keyword>
<keyword id="KW-0378">Hydrolase</keyword>
<keyword id="KW-0694">RNA-binding</keyword>
<keyword id="KW-0820">tRNA-binding</keyword>
<sequence>MRALIQRVSEASVTVEGELLGEIGPGLLILVCAMQGDGEDQASALAARIAKLRIFKDEAGKMNRSVRDTGGAALVVSQFTLAADTSRGNRPGFSAAAPPADGERLYRHFAAEIAACGIPTATGRFGADMKVRLLNDGPVTIWMES</sequence>